<gene>
    <name type="primary">CAPN2</name>
</gene>
<protein>
    <recommendedName>
        <fullName>Calpain-2 catalytic subunit</fullName>
        <ecNumber>3.4.22.53</ecNumber>
    </recommendedName>
    <alternativeName>
        <fullName>Calcium-activated neutral proteinase 2</fullName>
        <shortName>CANP 2</shortName>
    </alternativeName>
    <alternativeName>
        <fullName>Calpain M-type</fullName>
    </alternativeName>
    <alternativeName>
        <fullName>Calpain-2 large subunit</fullName>
    </alternativeName>
    <alternativeName>
        <fullName>Millimolar-calpain</fullName>
        <shortName>M-calpain</shortName>
    </alternativeName>
</protein>
<evidence type="ECO:0000250" key="1"/>
<evidence type="ECO:0000250" key="2">
    <source>
        <dbReference type="UniProtKB" id="O08529"/>
    </source>
</evidence>
<evidence type="ECO:0000250" key="3">
    <source>
        <dbReference type="UniProtKB" id="P17655"/>
    </source>
</evidence>
<evidence type="ECO:0000250" key="4">
    <source>
        <dbReference type="UniProtKB" id="Q07009"/>
    </source>
</evidence>
<evidence type="ECO:0000255" key="5">
    <source>
        <dbReference type="PROSITE-ProRule" id="PRU00448"/>
    </source>
</evidence>
<evidence type="ECO:0000305" key="6"/>
<sequence length="324" mass="37809">YPNTFWMNPQYLIKLEEEDEDQEDGESGCTFLVGLIQKHRRRQRKMGEDMHTIGFGIYEVPEELTGQTNIHLSKNFFLTHRARERSDTFINLREVLNRFKLPPGEYILVPSTFEPNKDGDFCIRVFSEKKADYQVVDDEIEADLEENDASEDDIDDGFRRLFAQLAGEDAEISAFELQTILRRVLAKRQDIKSDGFSIETCRIMVDMLDSDGSAKLGLKEFYILWTKIQKYQKIYREIDVDRSGTMNSYEMRKALEEAGFKLPCQLHQVIVARFADDQLIIDFDNFVRCLVRLETLFRISKQLDSENTGTIELDLISWLCFSVL</sequence>
<reference key="1">
    <citation type="journal article" date="1993" name="Biochimie">
        <title>Cloning the partial cDNAs of mu-calpain and m-calpain from porcine skeletal muscle.</title>
        <authorList>
            <person name="Sun W."/>
            <person name="Ji S.Q."/>
            <person name="Ebert P.J."/>
            <person name="Bidwell C.A."/>
            <person name="Hancock D.L."/>
        </authorList>
    </citation>
    <scope>NUCLEOTIDE SEQUENCE [MRNA] OF 1-209</scope>
    <source>
        <tissue>Skeletal muscle</tissue>
    </source>
</reference>
<reference key="2">
    <citation type="journal article" date="1998" name="Am. J. Physiol.">
        <title>Hypoxia-specific upregulation of calpain activity and gene expression in pulmonary artery endothelial cells.</title>
        <authorList>
            <person name="Zhang J.L."/>
            <person name="Patel J.M."/>
            <person name="Block E.R."/>
        </authorList>
    </citation>
    <scope>NUCLEOTIDE SEQUENCE [MRNA] OF 122-324</scope>
    <source>
        <tissue>Pulmonary artery</tissue>
    </source>
</reference>
<name>CAN2_PIG</name>
<organism>
    <name type="scientific">Sus scrofa</name>
    <name type="common">Pig</name>
    <dbReference type="NCBI Taxonomy" id="9823"/>
    <lineage>
        <taxon>Eukaryota</taxon>
        <taxon>Metazoa</taxon>
        <taxon>Chordata</taxon>
        <taxon>Craniata</taxon>
        <taxon>Vertebrata</taxon>
        <taxon>Euteleostomi</taxon>
        <taxon>Mammalia</taxon>
        <taxon>Eutheria</taxon>
        <taxon>Laurasiatheria</taxon>
        <taxon>Artiodactyla</taxon>
        <taxon>Suina</taxon>
        <taxon>Suidae</taxon>
        <taxon>Sus</taxon>
    </lineage>
</organism>
<dbReference type="EC" id="3.4.22.53"/>
<dbReference type="EMBL" id="U01181">
    <property type="protein sequence ID" value="AAC48401.1"/>
    <property type="molecule type" value="mRNA"/>
</dbReference>
<dbReference type="EMBL" id="U71320">
    <property type="protein sequence ID" value="AAB17381.1"/>
    <property type="molecule type" value="mRNA"/>
</dbReference>
<dbReference type="SMR" id="P43367"/>
<dbReference type="STRING" id="9823.ENSSSCP00000026311"/>
<dbReference type="BindingDB" id="P43367"/>
<dbReference type="ChEMBL" id="CHEMBL4143"/>
<dbReference type="MEROPS" id="C95.001"/>
<dbReference type="PaxDb" id="9823-ENSSSCP00000026311"/>
<dbReference type="PeptideAtlas" id="P43367"/>
<dbReference type="eggNOG" id="KOG0045">
    <property type="taxonomic scope" value="Eukaryota"/>
</dbReference>
<dbReference type="InParanoid" id="P43367"/>
<dbReference type="BRENDA" id="3.4.22.53">
    <property type="organism ID" value="6170"/>
</dbReference>
<dbReference type="Proteomes" id="UP000008227">
    <property type="component" value="Unplaced"/>
</dbReference>
<dbReference type="Proteomes" id="UP000314985">
    <property type="component" value="Unplaced"/>
</dbReference>
<dbReference type="Proteomes" id="UP000694570">
    <property type="component" value="Unplaced"/>
</dbReference>
<dbReference type="Proteomes" id="UP000694571">
    <property type="component" value="Unplaced"/>
</dbReference>
<dbReference type="Proteomes" id="UP000694720">
    <property type="component" value="Unplaced"/>
</dbReference>
<dbReference type="Proteomes" id="UP000694722">
    <property type="component" value="Unplaced"/>
</dbReference>
<dbReference type="Proteomes" id="UP000694723">
    <property type="component" value="Unplaced"/>
</dbReference>
<dbReference type="Proteomes" id="UP000694724">
    <property type="component" value="Unplaced"/>
</dbReference>
<dbReference type="Proteomes" id="UP000694725">
    <property type="component" value="Unplaced"/>
</dbReference>
<dbReference type="Proteomes" id="UP000694726">
    <property type="component" value="Unplaced"/>
</dbReference>
<dbReference type="Proteomes" id="UP000694727">
    <property type="component" value="Unplaced"/>
</dbReference>
<dbReference type="Proteomes" id="UP000694728">
    <property type="component" value="Unplaced"/>
</dbReference>
<dbReference type="GO" id="GO:0005737">
    <property type="term" value="C:cytoplasm"/>
    <property type="evidence" value="ECO:0000250"/>
    <property type="project" value="UniProtKB"/>
</dbReference>
<dbReference type="GO" id="GO:0030425">
    <property type="term" value="C:dendrite"/>
    <property type="evidence" value="ECO:0000250"/>
    <property type="project" value="UniProtKB"/>
</dbReference>
<dbReference type="GO" id="GO:0005886">
    <property type="term" value="C:plasma membrane"/>
    <property type="evidence" value="ECO:0007669"/>
    <property type="project" value="UniProtKB-SubCell"/>
</dbReference>
<dbReference type="GO" id="GO:0005509">
    <property type="term" value="F:calcium ion binding"/>
    <property type="evidence" value="ECO:0007669"/>
    <property type="project" value="InterPro"/>
</dbReference>
<dbReference type="GO" id="GO:0004198">
    <property type="term" value="F:calcium-dependent cysteine-type endopeptidase activity"/>
    <property type="evidence" value="ECO:0000250"/>
    <property type="project" value="UniProtKB"/>
</dbReference>
<dbReference type="GO" id="GO:0071230">
    <property type="term" value="P:cellular response to amino acid stimulus"/>
    <property type="evidence" value="ECO:0000250"/>
    <property type="project" value="UniProtKB"/>
</dbReference>
<dbReference type="GO" id="GO:0006508">
    <property type="term" value="P:proteolysis"/>
    <property type="evidence" value="ECO:0000250"/>
    <property type="project" value="UniProtKB"/>
</dbReference>
<dbReference type="CDD" id="cd00214">
    <property type="entry name" value="Calpain_III"/>
    <property type="match status" value="1"/>
</dbReference>
<dbReference type="FunFam" id="2.60.120.380:FF:000001">
    <property type="entry name" value="Calpain-1 catalytic subunit"/>
    <property type="match status" value="1"/>
</dbReference>
<dbReference type="FunFam" id="1.10.238.10:FF:000099">
    <property type="entry name" value="calpain-2 catalytic subunit"/>
    <property type="match status" value="1"/>
</dbReference>
<dbReference type="Gene3D" id="2.60.120.380">
    <property type="match status" value="1"/>
</dbReference>
<dbReference type="Gene3D" id="1.10.238.10">
    <property type="entry name" value="EF-hand"/>
    <property type="match status" value="1"/>
</dbReference>
<dbReference type="InterPro" id="IPR033883">
    <property type="entry name" value="C2_III"/>
</dbReference>
<dbReference type="InterPro" id="IPR022684">
    <property type="entry name" value="Calpain_cysteine_protease"/>
</dbReference>
<dbReference type="InterPro" id="IPR022682">
    <property type="entry name" value="Calpain_domain_III"/>
</dbReference>
<dbReference type="InterPro" id="IPR022683">
    <property type="entry name" value="Calpain_III"/>
</dbReference>
<dbReference type="InterPro" id="IPR036213">
    <property type="entry name" value="Calpain_III_sf"/>
</dbReference>
<dbReference type="InterPro" id="IPR011992">
    <property type="entry name" value="EF-hand-dom_pair"/>
</dbReference>
<dbReference type="InterPro" id="IPR018247">
    <property type="entry name" value="EF_Hand_1_Ca_BS"/>
</dbReference>
<dbReference type="InterPro" id="IPR002048">
    <property type="entry name" value="EF_hand_dom"/>
</dbReference>
<dbReference type="PANTHER" id="PTHR10183">
    <property type="entry name" value="CALPAIN"/>
    <property type="match status" value="1"/>
</dbReference>
<dbReference type="PANTHER" id="PTHR10183:SF268">
    <property type="entry name" value="CALPAIN-2 CATALYTIC SUBUNIT"/>
    <property type="match status" value="1"/>
</dbReference>
<dbReference type="Pfam" id="PF01067">
    <property type="entry name" value="Calpain_III"/>
    <property type="match status" value="1"/>
</dbReference>
<dbReference type="Pfam" id="PF13833">
    <property type="entry name" value="EF-hand_8"/>
    <property type="match status" value="1"/>
</dbReference>
<dbReference type="SMART" id="SM00720">
    <property type="entry name" value="calpain_III"/>
    <property type="match status" value="1"/>
</dbReference>
<dbReference type="SUPFAM" id="SSF49758">
    <property type="entry name" value="Calpain large subunit, middle domain (domain III)"/>
    <property type="match status" value="1"/>
</dbReference>
<dbReference type="SUPFAM" id="SSF47473">
    <property type="entry name" value="EF-hand"/>
    <property type="match status" value="1"/>
</dbReference>
<dbReference type="PROSITE" id="PS00018">
    <property type="entry name" value="EF_HAND_1"/>
    <property type="match status" value="1"/>
</dbReference>
<dbReference type="PROSITE" id="PS50222">
    <property type="entry name" value="EF_HAND_2"/>
    <property type="match status" value="1"/>
</dbReference>
<keyword id="KW-0106">Calcium</keyword>
<keyword id="KW-1003">Cell membrane</keyword>
<keyword id="KW-0963">Cytoplasm</keyword>
<keyword id="KW-0378">Hydrolase</keyword>
<keyword id="KW-0472">Membrane</keyword>
<keyword id="KW-0479">Metal-binding</keyword>
<keyword id="KW-0645">Protease</keyword>
<keyword id="KW-1185">Reference proteome</keyword>
<keyword id="KW-0677">Repeat</keyword>
<keyword id="KW-0788">Thiol protease</keyword>
<accession>P43367</accession>
<proteinExistence type="evidence at transcript level"/>
<feature type="chain" id="PRO_0000207703" description="Calpain-2 catalytic subunit">
    <location>
        <begin position="1" status="less than"/>
        <end position="324"/>
    </location>
</feature>
<feature type="domain" description="EF-hand 1" evidence="6">
    <location>
        <begin position="190"/>
        <end position="224"/>
    </location>
</feature>
<feature type="domain" description="EF-hand 2" evidence="5">
    <location>
        <begin position="226"/>
        <end position="261"/>
    </location>
</feature>
<feature type="region of interest" description="Domain III">
    <location>
        <begin position="1" status="less than"/>
        <end position="138"/>
    </location>
</feature>
<feature type="region of interest" description="Linker">
    <location>
        <begin position="139"/>
        <end position="153"/>
    </location>
</feature>
<feature type="region of interest" description="Domain IV">
    <location>
        <begin position="158"/>
        <end position="324"/>
    </location>
</feature>
<feature type="binding site" evidence="1">
    <location>
        <position position="166"/>
    </location>
    <ligand>
        <name>Ca(2+)</name>
        <dbReference type="ChEBI" id="CHEBI:29108"/>
        <label>5</label>
    </ligand>
</feature>
<feature type="binding site" evidence="1">
    <location>
        <position position="169"/>
    </location>
    <ligand>
        <name>Ca(2+)</name>
        <dbReference type="ChEBI" id="CHEBI:29108"/>
        <label>5</label>
    </ligand>
</feature>
<feature type="binding site" evidence="1">
    <location>
        <position position="171"/>
    </location>
    <ligand>
        <name>Ca(2+)</name>
        <dbReference type="ChEBI" id="CHEBI:29108"/>
        <label>5</label>
    </ligand>
</feature>
<feature type="binding site" evidence="1">
    <location>
        <position position="176"/>
    </location>
    <ligand>
        <name>Ca(2+)</name>
        <dbReference type="ChEBI" id="CHEBI:29108"/>
        <label>5</label>
    </ligand>
</feature>
<feature type="binding site" evidence="1">
    <location>
        <position position="209"/>
    </location>
    <ligand>
        <name>Ca(2+)</name>
        <dbReference type="ChEBI" id="CHEBI:29108"/>
        <label>6</label>
    </ligand>
</feature>
<feature type="binding site" evidence="1">
    <location>
        <position position="211"/>
    </location>
    <ligand>
        <name>Ca(2+)</name>
        <dbReference type="ChEBI" id="CHEBI:29108"/>
        <label>6</label>
    </ligand>
</feature>
<feature type="binding site" evidence="1">
    <location>
        <position position="213"/>
    </location>
    <ligand>
        <name>Ca(2+)</name>
        <dbReference type="ChEBI" id="CHEBI:29108"/>
        <label>6</label>
    </ligand>
</feature>
<feature type="binding site" evidence="1">
    <location>
        <position position="215"/>
    </location>
    <ligand>
        <name>Ca(2+)</name>
        <dbReference type="ChEBI" id="CHEBI:29108"/>
        <label>6</label>
    </ligand>
</feature>
<feature type="binding site" evidence="1">
    <location>
        <position position="220"/>
    </location>
    <ligand>
        <name>Ca(2+)</name>
        <dbReference type="ChEBI" id="CHEBI:29108"/>
        <label>6</label>
    </ligand>
</feature>
<feature type="binding site" evidence="5">
    <location>
        <position position="239"/>
    </location>
    <ligand>
        <name>Ca(2+)</name>
        <dbReference type="ChEBI" id="CHEBI:29108"/>
        <label>7</label>
    </ligand>
</feature>
<feature type="binding site" evidence="5">
    <location>
        <position position="241"/>
    </location>
    <ligand>
        <name>Ca(2+)</name>
        <dbReference type="ChEBI" id="CHEBI:29108"/>
        <label>7</label>
    </ligand>
</feature>
<feature type="binding site" evidence="5">
    <location>
        <position position="243"/>
    </location>
    <ligand>
        <name>Ca(2+)</name>
        <dbReference type="ChEBI" id="CHEBI:29108"/>
        <label>7</label>
    </ligand>
</feature>
<feature type="binding site" evidence="5">
    <location>
        <position position="245"/>
    </location>
    <ligand>
        <name>Ca(2+)</name>
        <dbReference type="ChEBI" id="CHEBI:29108"/>
        <label>7</label>
    </ligand>
</feature>
<feature type="binding site" evidence="5">
    <location>
        <position position="250"/>
    </location>
    <ligand>
        <name>Ca(2+)</name>
        <dbReference type="ChEBI" id="CHEBI:29108"/>
        <label>7</label>
    </ligand>
</feature>
<feature type="binding site" evidence="1">
    <location>
        <position position="282"/>
    </location>
    <ligand>
        <name>Ca(2+)</name>
        <dbReference type="ChEBI" id="CHEBI:29108"/>
        <label>1</label>
    </ligand>
</feature>
<feature type="binding site" evidence="1">
    <location>
        <position position="285"/>
    </location>
    <ligand>
        <name>Ca(2+)</name>
        <dbReference type="ChEBI" id="CHEBI:29108"/>
        <label>1</label>
    </ligand>
</feature>
<feature type="sequence conflict" description="In Ref. 2; AAB17381." evidence="6" ref="2">
    <original>R</original>
    <variation>K</variation>
    <location>
        <position position="202"/>
    </location>
</feature>
<feature type="non-terminal residue">
    <location>
        <position position="1"/>
    </location>
</feature>
<comment type="function">
    <text evidence="2 3">Calcium-regulated non-lysosomal thiol-protease which catalyzes limited proteolysis of substrates involved in cytoskeletal remodeling and signal transduction. Proteolytically cleaves MYOC at 'Arg-226'. Proteolytically cleaves CPEB3 following neuronal stimulation which abolishes CPEB3 translational repressor activity, leading to translation of CPEB3 target mRNAs.</text>
</comment>
<comment type="catalytic activity">
    <reaction>
        <text>Broad endopeptidase specificity.</text>
        <dbReference type="EC" id="3.4.22.53"/>
    </reaction>
</comment>
<comment type="cofactor">
    <cofactor evidence="1">
        <name>Ca(2+)</name>
        <dbReference type="ChEBI" id="CHEBI:29108"/>
    </cofactor>
    <text evidence="1">Binds 7 Ca(2+) ions.</text>
</comment>
<comment type="activity regulation">
    <text>Activated by 200-1000 micromolar concentrations of calcium and inhibited by calpastatin.</text>
</comment>
<comment type="subunit">
    <text evidence="2 4">Forms a heterodimer with a small (regulatory) subunit (CAPNS1). Interacts with CPEB3; this leads to cleavage of CPEB3.</text>
</comment>
<comment type="subcellular location">
    <subcellularLocation>
        <location evidence="1">Cytoplasm</location>
    </subcellularLocation>
    <subcellularLocation>
        <location evidence="1">Cell membrane</location>
    </subcellularLocation>
    <text evidence="1">Translocates to the plasma membrane upon Ca(2+) binding.</text>
</comment>
<comment type="tissue specificity">
    <text>Ubiquitous.</text>
</comment>
<comment type="similarity">
    <text evidence="6">Belongs to the peptidase C2 family.</text>
</comment>